<gene>
    <name type="ordered locus">RF_0381</name>
</gene>
<dbReference type="EMBL" id="CP000053">
    <property type="protein sequence ID" value="AAY61232.1"/>
    <property type="molecule type" value="Genomic_DNA"/>
</dbReference>
<dbReference type="SMR" id="Q4UMH6"/>
<dbReference type="STRING" id="315456.RF_0381"/>
<dbReference type="KEGG" id="rfe:RF_0381"/>
<dbReference type="eggNOG" id="COG0317">
    <property type="taxonomic scope" value="Bacteria"/>
</dbReference>
<dbReference type="eggNOG" id="COG0666">
    <property type="taxonomic scope" value="Bacteria"/>
</dbReference>
<dbReference type="HOGENOM" id="CLU_008129_0_0_5"/>
<dbReference type="OrthoDB" id="7837736at2"/>
<dbReference type="Proteomes" id="UP000008548">
    <property type="component" value="Chromosome"/>
</dbReference>
<dbReference type="GO" id="GO:0015969">
    <property type="term" value="P:guanosine tetraphosphate metabolic process"/>
    <property type="evidence" value="ECO:0007669"/>
    <property type="project" value="InterPro"/>
</dbReference>
<dbReference type="CDD" id="cd05399">
    <property type="entry name" value="NT_Rel-Spo_like"/>
    <property type="match status" value="1"/>
</dbReference>
<dbReference type="Gene3D" id="1.25.40.20">
    <property type="entry name" value="Ankyrin repeat-containing domain"/>
    <property type="match status" value="7"/>
</dbReference>
<dbReference type="Gene3D" id="3.30.460.10">
    <property type="entry name" value="Beta Polymerase, domain 2"/>
    <property type="match status" value="1"/>
</dbReference>
<dbReference type="InterPro" id="IPR002110">
    <property type="entry name" value="Ankyrin_rpt"/>
</dbReference>
<dbReference type="InterPro" id="IPR036770">
    <property type="entry name" value="Ankyrin_rpt-contain_sf"/>
</dbReference>
<dbReference type="InterPro" id="IPR043519">
    <property type="entry name" value="NT_sf"/>
</dbReference>
<dbReference type="InterPro" id="IPR007685">
    <property type="entry name" value="RelA_SpoT"/>
</dbReference>
<dbReference type="PANTHER" id="PTHR24188">
    <property type="entry name" value="ANKYRIN REPEAT PROTEIN"/>
    <property type="match status" value="1"/>
</dbReference>
<dbReference type="PANTHER" id="PTHR24188:SF29">
    <property type="entry name" value="GH09064P"/>
    <property type="match status" value="1"/>
</dbReference>
<dbReference type="Pfam" id="PF00023">
    <property type="entry name" value="Ank"/>
    <property type="match status" value="1"/>
</dbReference>
<dbReference type="Pfam" id="PF12796">
    <property type="entry name" value="Ank_2"/>
    <property type="match status" value="4"/>
</dbReference>
<dbReference type="Pfam" id="PF13637">
    <property type="entry name" value="Ank_4"/>
    <property type="match status" value="1"/>
</dbReference>
<dbReference type="Pfam" id="PF04607">
    <property type="entry name" value="RelA_SpoT"/>
    <property type="match status" value="1"/>
</dbReference>
<dbReference type="PRINTS" id="PR01415">
    <property type="entry name" value="ANKYRIN"/>
</dbReference>
<dbReference type="SMART" id="SM00248">
    <property type="entry name" value="ANK"/>
    <property type="match status" value="17"/>
</dbReference>
<dbReference type="SMART" id="SM00954">
    <property type="entry name" value="RelA_SpoT"/>
    <property type="match status" value="1"/>
</dbReference>
<dbReference type="SUPFAM" id="SSF48403">
    <property type="entry name" value="Ankyrin repeat"/>
    <property type="match status" value="2"/>
</dbReference>
<dbReference type="SUPFAM" id="SSF81301">
    <property type="entry name" value="Nucleotidyltransferase"/>
    <property type="match status" value="1"/>
</dbReference>
<dbReference type="PROSITE" id="PS50297">
    <property type="entry name" value="ANK_REP_REGION"/>
    <property type="match status" value="1"/>
</dbReference>
<dbReference type="PROSITE" id="PS50088">
    <property type="entry name" value="ANK_REPEAT"/>
    <property type="match status" value="15"/>
</dbReference>
<reference key="1">
    <citation type="journal article" date="2005" name="PLoS Biol.">
        <title>The genome sequence of Rickettsia felis identifies the first putative conjugative plasmid in an obligate intracellular parasite.</title>
        <authorList>
            <person name="Ogata H."/>
            <person name="Renesto P."/>
            <person name="Audic S."/>
            <person name="Robert C."/>
            <person name="Blanc G."/>
            <person name="Fournier P.-E."/>
            <person name="Parinello H."/>
            <person name="Claverie J.-M."/>
            <person name="Raoult D."/>
        </authorList>
    </citation>
    <scope>NUCLEOTIDE SEQUENCE [LARGE SCALE GENOMIC DNA]</scope>
    <source>
        <strain>ATCC VR-1525 / URRWXCal2</strain>
    </source>
</reference>
<proteinExistence type="predicted"/>
<keyword id="KW-0040">ANK repeat</keyword>
<keyword id="KW-0677">Repeat</keyword>
<feature type="chain" id="PRO_0000281749" description="Putative ankyrin repeat protein RF_0381">
    <location>
        <begin position="1"/>
        <end position="1179"/>
    </location>
</feature>
<feature type="repeat" description="ANK 1">
    <location>
        <begin position="282"/>
        <end position="311"/>
    </location>
</feature>
<feature type="repeat" description="ANK 2">
    <location>
        <begin position="604"/>
        <end position="633"/>
    </location>
</feature>
<feature type="repeat" description="ANK 3">
    <location>
        <begin position="637"/>
        <end position="666"/>
    </location>
</feature>
<feature type="repeat" description="ANK 4">
    <location>
        <begin position="670"/>
        <end position="699"/>
    </location>
</feature>
<feature type="repeat" description="ANK 5">
    <location>
        <begin position="703"/>
        <end position="732"/>
    </location>
</feature>
<feature type="repeat" description="ANK 6">
    <location>
        <begin position="736"/>
        <end position="765"/>
    </location>
</feature>
<feature type="repeat" description="ANK 7">
    <location>
        <begin position="769"/>
        <end position="798"/>
    </location>
</feature>
<feature type="repeat" description="ANK 8">
    <location>
        <begin position="802"/>
        <end position="831"/>
    </location>
</feature>
<feature type="repeat" description="ANK 9">
    <location>
        <begin position="833"/>
        <end position="860"/>
    </location>
</feature>
<feature type="repeat" description="ANK 10">
    <location>
        <begin position="864"/>
        <end position="893"/>
    </location>
</feature>
<feature type="repeat" description="ANK 11">
    <location>
        <begin position="897"/>
        <end position="926"/>
    </location>
</feature>
<feature type="repeat" description="ANK 12">
    <location>
        <begin position="930"/>
        <end position="959"/>
    </location>
</feature>
<feature type="repeat" description="ANK 13">
    <location>
        <begin position="963"/>
        <end position="992"/>
    </location>
</feature>
<feature type="repeat" description="ANK 14">
    <location>
        <begin position="996"/>
        <end position="1025"/>
    </location>
</feature>
<feature type="repeat" description="ANK 15">
    <location>
        <begin position="1029"/>
        <end position="1058"/>
    </location>
</feature>
<feature type="repeat" description="ANK 16">
    <location>
        <begin position="1062"/>
        <end position="1091"/>
    </location>
</feature>
<feature type="repeat" description="ANK 17">
    <location>
        <begin position="1095"/>
        <end position="1124"/>
    </location>
</feature>
<feature type="repeat" description="ANK 18">
    <location>
        <begin position="1128"/>
        <end position="1157"/>
    </location>
</feature>
<name>Y381_RICFE</name>
<accession>Q4UMH6</accession>
<organism>
    <name type="scientific">Rickettsia felis (strain ATCC VR-1525 / URRWXCal2)</name>
    <name type="common">Rickettsia azadi</name>
    <dbReference type="NCBI Taxonomy" id="315456"/>
    <lineage>
        <taxon>Bacteria</taxon>
        <taxon>Pseudomonadati</taxon>
        <taxon>Pseudomonadota</taxon>
        <taxon>Alphaproteobacteria</taxon>
        <taxon>Rickettsiales</taxon>
        <taxon>Rickettsiaceae</taxon>
        <taxon>Rickettsieae</taxon>
        <taxon>Rickettsia</taxon>
        <taxon>spotted fever group</taxon>
    </lineage>
</organism>
<sequence>MLYQNITNNSCINQALELYHKYCYDKTTYPDQIHTITKALQLDSSSFTAVLLHENIQHLNLEDYNHFNNNIIYLVDVINKLSTIHYKPYAEQYIHFHELLLTINPKLQETAILTSLVPLLHKVSIFNLEYNNTNAQHISEIITNCYIPYLLSYTAHNDLAYLLQDLCFKIQYPEERNRILHYMYWLYPDIDNIIHNIEQQFGNIFRKLNIKASLSYRIKSPYSIWIKTLVKDIHITALNDILAFRAIVPNKKACYDVSKLIHLHYNTITSQFVDYIRYPKNNGYQSIHLVISGGNKGNIELQIRSTTMHRQTQYGSAHHTYKVNKYYVSRTNNNVSVVLFNITLSYSNRILSVYVSIVTITSTINNNLYTDYNTIPSFTQYTQHSTNFVDNDITTCTLSRTTTPEYITYYNNNLSLLIKDTNTIPYNFFLNINLNLSNTVEYKLVPLAVVQIPASNLLFEHNSVFINITYKPILAECAFPATITYTKRHEDSNIRSIFKLFEHNSVFINITYKPILAECAFPATITYTKRHEDSNIRSIFKPPSPTYNTLLATINDKVVLEQYGQKEFLSTTINTNITQMLPIITLLVDPSELNKRINDISDSNKDQLLRLGLQLGCVESVPLLITHGANPNATNCHGVISLHCAAKNGNLDLAKLLAKNGADVNAKTDNGETVLHYAVKSGNLHLVKWLIENQANIHAKTDNGETVLHYAVSFNNSDLVYLLIAYGADVNAKTDNGLTALHYAVYDGNLDLVSLLISHGADVNAKTNSGETILYSAVDYGSPDLVYLLIAYGADVNAKTDNGETVLHYAVESGNLDLVSLLIHNGANVNNAKTILHFAAKSGNLNLVNWLIKNKADIHAKTNSGETILHFAAESGNLNLVNWLIKNKADIHAKTNSGETILHFAAKSGNLNLVNWLIKNKADIHAKTNSGETILHFAAKSGNLNLVNWLIKNKADIHAKTNSGETILHFAAESGNLNLVSLLIHNGTDINTKTDDGLTALHYAVESGNLNLVSLLIHKGIDVNAKTNSGETILHFAVDLGSLDLVSLLMVRGADVNAKTDDGLTALHYAVESDNLALVSLLMVYGADVNAKNNSGETPLHYAVIFNSLDLVSLLIHNGADINTKNNSGETVLNSIMEFNNCNILKSFILGGADINLETMLPDDQTDSIINLCGDLRIS</sequence>
<protein>
    <recommendedName>
        <fullName>Putative ankyrin repeat protein RF_0381</fullName>
    </recommendedName>
</protein>